<sequence length="68" mass="7687">MAKKTTEAKKTVTVEQIGSPIRRPAIQRQTLVGLGLNKMHRQRTLEDTPAVRGMIRAVQHLVRVVDEK</sequence>
<accession>P68995</accession>
<accession>Q8U570</accession>
<gene>
    <name evidence="1" type="primary">rpmD</name>
    <name type="ordered locus">Atu1928.1</name>
    <name type="ORF">AGR_C_3526</name>
</gene>
<proteinExistence type="inferred from homology"/>
<dbReference type="EMBL" id="AE007869">
    <property type="protein sequence ID" value="AAK87691.2"/>
    <property type="molecule type" value="Genomic_DNA"/>
</dbReference>
<dbReference type="RefSeq" id="NP_354906.2">
    <property type="nucleotide sequence ID" value="NC_003062.2"/>
</dbReference>
<dbReference type="RefSeq" id="WP_003495212.1">
    <property type="nucleotide sequence ID" value="NC_003062.2"/>
</dbReference>
<dbReference type="SMR" id="P68995"/>
<dbReference type="STRING" id="176299.Atu8065"/>
<dbReference type="EnsemblBacteria" id="AAK87691">
    <property type="protein sequence ID" value="AAK87691"/>
    <property type="gene ID" value="Atu8065"/>
</dbReference>
<dbReference type="GeneID" id="97364675"/>
<dbReference type="KEGG" id="atu:Atu8065"/>
<dbReference type="PATRIC" id="fig|176299.10.peg.1940"/>
<dbReference type="eggNOG" id="COG1841">
    <property type="taxonomic scope" value="Bacteria"/>
</dbReference>
<dbReference type="HOGENOM" id="CLU_131047_1_2_5"/>
<dbReference type="OrthoDB" id="9812790at2"/>
<dbReference type="PhylomeDB" id="P68995"/>
<dbReference type="PRO" id="PR:P68995"/>
<dbReference type="Proteomes" id="UP000000813">
    <property type="component" value="Chromosome circular"/>
</dbReference>
<dbReference type="GO" id="GO:0022625">
    <property type="term" value="C:cytosolic large ribosomal subunit"/>
    <property type="evidence" value="ECO:0007669"/>
    <property type="project" value="TreeGrafter"/>
</dbReference>
<dbReference type="GO" id="GO:0003735">
    <property type="term" value="F:structural constituent of ribosome"/>
    <property type="evidence" value="ECO:0007669"/>
    <property type="project" value="InterPro"/>
</dbReference>
<dbReference type="GO" id="GO:0006412">
    <property type="term" value="P:translation"/>
    <property type="evidence" value="ECO:0007669"/>
    <property type="project" value="UniProtKB-UniRule"/>
</dbReference>
<dbReference type="CDD" id="cd01658">
    <property type="entry name" value="Ribosomal_L30"/>
    <property type="match status" value="1"/>
</dbReference>
<dbReference type="Gene3D" id="3.30.1390.20">
    <property type="entry name" value="Ribosomal protein L30, ferredoxin-like fold domain"/>
    <property type="match status" value="1"/>
</dbReference>
<dbReference type="HAMAP" id="MF_01371_B">
    <property type="entry name" value="Ribosomal_uL30_B"/>
    <property type="match status" value="1"/>
</dbReference>
<dbReference type="InterPro" id="IPR036919">
    <property type="entry name" value="Ribo_uL30_ferredoxin-like_sf"/>
</dbReference>
<dbReference type="InterPro" id="IPR005996">
    <property type="entry name" value="Ribosomal_uL30_bac-type"/>
</dbReference>
<dbReference type="InterPro" id="IPR016082">
    <property type="entry name" value="Ribosomal_uL30_ferredoxin-like"/>
</dbReference>
<dbReference type="NCBIfam" id="TIGR01308">
    <property type="entry name" value="rpmD_bact"/>
    <property type="match status" value="1"/>
</dbReference>
<dbReference type="PANTHER" id="PTHR15892:SF2">
    <property type="entry name" value="LARGE RIBOSOMAL SUBUNIT PROTEIN UL30M"/>
    <property type="match status" value="1"/>
</dbReference>
<dbReference type="PANTHER" id="PTHR15892">
    <property type="entry name" value="MITOCHONDRIAL RIBOSOMAL PROTEIN L30"/>
    <property type="match status" value="1"/>
</dbReference>
<dbReference type="Pfam" id="PF00327">
    <property type="entry name" value="Ribosomal_L30"/>
    <property type="match status" value="1"/>
</dbReference>
<dbReference type="PIRSF" id="PIRSF002211">
    <property type="entry name" value="Ribosomal_L30_bac-type"/>
    <property type="match status" value="1"/>
</dbReference>
<dbReference type="SUPFAM" id="SSF55129">
    <property type="entry name" value="Ribosomal protein L30p/L7e"/>
    <property type="match status" value="1"/>
</dbReference>
<evidence type="ECO:0000255" key="1">
    <source>
        <dbReference type="HAMAP-Rule" id="MF_01371"/>
    </source>
</evidence>
<evidence type="ECO:0000305" key="2"/>
<keyword id="KW-1185">Reference proteome</keyword>
<keyword id="KW-0687">Ribonucleoprotein</keyword>
<keyword id="KW-0689">Ribosomal protein</keyword>
<comment type="subunit">
    <text evidence="1">Part of the 50S ribosomal subunit.</text>
</comment>
<comment type="similarity">
    <text evidence="1">Belongs to the universal ribosomal protein uL30 family.</text>
</comment>
<reference key="1">
    <citation type="journal article" date="2001" name="Science">
        <title>The genome of the natural genetic engineer Agrobacterium tumefaciens C58.</title>
        <authorList>
            <person name="Wood D.W."/>
            <person name="Setubal J.C."/>
            <person name="Kaul R."/>
            <person name="Monks D.E."/>
            <person name="Kitajima J.P."/>
            <person name="Okura V.K."/>
            <person name="Zhou Y."/>
            <person name="Chen L."/>
            <person name="Wood G.E."/>
            <person name="Almeida N.F. Jr."/>
            <person name="Woo L."/>
            <person name="Chen Y."/>
            <person name="Paulsen I.T."/>
            <person name="Eisen J.A."/>
            <person name="Karp P.D."/>
            <person name="Bovee D. Sr."/>
            <person name="Chapman P."/>
            <person name="Clendenning J."/>
            <person name="Deatherage G."/>
            <person name="Gillet W."/>
            <person name="Grant C."/>
            <person name="Kutyavin T."/>
            <person name="Levy R."/>
            <person name="Li M.-J."/>
            <person name="McClelland E."/>
            <person name="Palmieri A."/>
            <person name="Raymond C."/>
            <person name="Rouse G."/>
            <person name="Saenphimmachak C."/>
            <person name="Wu Z."/>
            <person name="Romero P."/>
            <person name="Gordon D."/>
            <person name="Zhang S."/>
            <person name="Yoo H."/>
            <person name="Tao Y."/>
            <person name="Biddle P."/>
            <person name="Jung M."/>
            <person name="Krespan W."/>
            <person name="Perry M."/>
            <person name="Gordon-Kamm B."/>
            <person name="Liao L."/>
            <person name="Kim S."/>
            <person name="Hendrick C."/>
            <person name="Zhao Z.-Y."/>
            <person name="Dolan M."/>
            <person name="Chumley F."/>
            <person name="Tingey S.V."/>
            <person name="Tomb J.-F."/>
            <person name="Gordon M.P."/>
            <person name="Olson M.V."/>
            <person name="Nester E.W."/>
        </authorList>
    </citation>
    <scope>NUCLEOTIDE SEQUENCE [LARGE SCALE GENOMIC DNA]</scope>
    <source>
        <strain>C58 / ATCC 33970</strain>
    </source>
</reference>
<reference key="2">
    <citation type="journal article" date="2001" name="Science">
        <title>Genome sequence of the plant pathogen and biotechnology agent Agrobacterium tumefaciens C58.</title>
        <authorList>
            <person name="Goodner B."/>
            <person name="Hinkle G."/>
            <person name="Gattung S."/>
            <person name="Miller N."/>
            <person name="Blanchard M."/>
            <person name="Qurollo B."/>
            <person name="Goldman B.S."/>
            <person name="Cao Y."/>
            <person name="Askenazi M."/>
            <person name="Halling C."/>
            <person name="Mullin L."/>
            <person name="Houmiel K."/>
            <person name="Gordon J."/>
            <person name="Vaudin M."/>
            <person name="Iartchouk O."/>
            <person name="Epp A."/>
            <person name="Liu F."/>
            <person name="Wollam C."/>
            <person name="Allinger M."/>
            <person name="Doughty D."/>
            <person name="Scott C."/>
            <person name="Lappas C."/>
            <person name="Markelz B."/>
            <person name="Flanagan C."/>
            <person name="Crowell C."/>
            <person name="Gurson J."/>
            <person name="Lomo C."/>
            <person name="Sear C."/>
            <person name="Strub G."/>
            <person name="Cielo C."/>
            <person name="Slater S."/>
        </authorList>
    </citation>
    <scope>NUCLEOTIDE SEQUENCE [LARGE SCALE GENOMIC DNA]</scope>
    <source>
        <strain>C58 / ATCC 33970</strain>
    </source>
</reference>
<reference key="3">
    <citation type="journal article" date="2005" name="Bioinformatics">
        <title>Improving genome annotations using phylogenetic profile anomaly detection.</title>
        <authorList>
            <person name="Mikkelsen T.S."/>
            <person name="Galagan J.E."/>
            <person name="Mesirov J.P."/>
        </authorList>
    </citation>
    <scope>IDENTIFICATION</scope>
</reference>
<feature type="chain" id="PRO_0000104579" description="Large ribosomal subunit protein uL30">
    <location>
        <begin position="1"/>
        <end position="68"/>
    </location>
</feature>
<organism>
    <name type="scientific">Agrobacterium fabrum (strain C58 / ATCC 33970)</name>
    <name type="common">Agrobacterium tumefaciens (strain C58)</name>
    <dbReference type="NCBI Taxonomy" id="176299"/>
    <lineage>
        <taxon>Bacteria</taxon>
        <taxon>Pseudomonadati</taxon>
        <taxon>Pseudomonadota</taxon>
        <taxon>Alphaproteobacteria</taxon>
        <taxon>Hyphomicrobiales</taxon>
        <taxon>Rhizobiaceae</taxon>
        <taxon>Rhizobium/Agrobacterium group</taxon>
        <taxon>Agrobacterium</taxon>
        <taxon>Agrobacterium tumefaciens complex</taxon>
    </lineage>
</organism>
<protein>
    <recommendedName>
        <fullName evidence="1">Large ribosomal subunit protein uL30</fullName>
    </recommendedName>
    <alternativeName>
        <fullName evidence="2">50S ribosomal protein L30</fullName>
    </alternativeName>
</protein>
<name>RL30_AGRFC</name>